<proteinExistence type="inferred from homology"/>
<feature type="chain" id="PRO_0000070904" description="Chaperone protein DnaJ">
    <location>
        <begin position="1"/>
        <end position="378"/>
    </location>
</feature>
<feature type="domain" description="J" evidence="1">
    <location>
        <begin position="5"/>
        <end position="69"/>
    </location>
</feature>
<feature type="repeat" description="CXXCXGXG motif">
    <location>
        <begin position="147"/>
        <end position="154"/>
    </location>
</feature>
<feature type="repeat" description="CXXCXGXG motif">
    <location>
        <begin position="164"/>
        <end position="171"/>
    </location>
</feature>
<feature type="repeat" description="CXXCXGXG motif">
    <location>
        <begin position="190"/>
        <end position="197"/>
    </location>
</feature>
<feature type="repeat" description="CXXCXGXG motif">
    <location>
        <begin position="204"/>
        <end position="211"/>
    </location>
</feature>
<feature type="zinc finger region" description="CR-type" evidence="1">
    <location>
        <begin position="134"/>
        <end position="216"/>
    </location>
</feature>
<feature type="binding site" evidence="1">
    <location>
        <position position="147"/>
    </location>
    <ligand>
        <name>Zn(2+)</name>
        <dbReference type="ChEBI" id="CHEBI:29105"/>
        <label>1</label>
    </ligand>
</feature>
<feature type="binding site" evidence="1">
    <location>
        <position position="150"/>
    </location>
    <ligand>
        <name>Zn(2+)</name>
        <dbReference type="ChEBI" id="CHEBI:29105"/>
        <label>1</label>
    </ligand>
</feature>
<feature type="binding site" evidence="1">
    <location>
        <position position="164"/>
    </location>
    <ligand>
        <name>Zn(2+)</name>
        <dbReference type="ChEBI" id="CHEBI:29105"/>
        <label>2</label>
    </ligand>
</feature>
<feature type="binding site" evidence="1">
    <location>
        <position position="167"/>
    </location>
    <ligand>
        <name>Zn(2+)</name>
        <dbReference type="ChEBI" id="CHEBI:29105"/>
        <label>2</label>
    </ligand>
</feature>
<feature type="binding site" evidence="1">
    <location>
        <position position="190"/>
    </location>
    <ligand>
        <name>Zn(2+)</name>
        <dbReference type="ChEBI" id="CHEBI:29105"/>
        <label>2</label>
    </ligand>
</feature>
<feature type="binding site" evidence="1">
    <location>
        <position position="193"/>
    </location>
    <ligand>
        <name>Zn(2+)</name>
        <dbReference type="ChEBI" id="CHEBI:29105"/>
        <label>2</label>
    </ligand>
</feature>
<feature type="binding site" evidence="1">
    <location>
        <position position="204"/>
    </location>
    <ligand>
        <name>Zn(2+)</name>
        <dbReference type="ChEBI" id="CHEBI:29105"/>
        <label>1</label>
    </ligand>
</feature>
<feature type="binding site" evidence="1">
    <location>
        <position position="207"/>
    </location>
    <ligand>
        <name>Zn(2+)</name>
        <dbReference type="ChEBI" id="CHEBI:29105"/>
        <label>1</label>
    </ligand>
</feature>
<feature type="sequence conflict" description="In Ref. 2." evidence="2" ref="2">
    <original>G</original>
    <variation>GGAGGFGG</variation>
    <location>
        <position position="86"/>
    </location>
</feature>
<reference key="1">
    <citation type="journal article" date="2001" name="Proc. Natl. Acad. Sci. U.S.A.">
        <title>Complete genome sequence of an M1 strain of Streptococcus pyogenes.</title>
        <authorList>
            <person name="Ferretti J.J."/>
            <person name="McShan W.M."/>
            <person name="Ajdic D.J."/>
            <person name="Savic D.J."/>
            <person name="Savic G."/>
            <person name="Lyon K."/>
            <person name="Primeaux C."/>
            <person name="Sezate S."/>
            <person name="Suvorov A.N."/>
            <person name="Kenton S."/>
            <person name="Lai H.S."/>
            <person name="Lin S.P."/>
            <person name="Qian Y."/>
            <person name="Jia H.G."/>
            <person name="Najar F.Z."/>
            <person name="Ren Q."/>
            <person name="Zhu H."/>
            <person name="Song L."/>
            <person name="White J."/>
            <person name="Yuan X."/>
            <person name="Clifton S.W."/>
            <person name="Roe B.A."/>
            <person name="McLaughlin R.E."/>
        </authorList>
    </citation>
    <scope>NUCLEOTIDE SEQUENCE [LARGE SCALE GENOMIC DNA]</scope>
    <source>
        <strain>ATCC 700294 / SF370 / Serotype M1</strain>
    </source>
</reference>
<reference key="2">
    <citation type="journal article" date="2005" name="J. Infect. Dis.">
        <title>Evolutionary origin and emergence of a highly successful clone of serotype M1 group A Streptococcus involved multiple horizontal gene transfer events.</title>
        <authorList>
            <person name="Sumby P."/>
            <person name="Porcella S.F."/>
            <person name="Madrigal A.G."/>
            <person name="Barbian K.D."/>
            <person name="Virtaneva K."/>
            <person name="Ricklefs S.M."/>
            <person name="Sturdevant D.E."/>
            <person name="Graham M.R."/>
            <person name="Vuopio-Varkila J."/>
            <person name="Hoe N.P."/>
            <person name="Musser J.M."/>
        </authorList>
    </citation>
    <scope>NUCLEOTIDE SEQUENCE [LARGE SCALE GENOMIC DNA]</scope>
    <source>
        <strain>ATCC BAA-947 / MGAS5005 / Serotype M1</strain>
    </source>
</reference>
<comment type="function">
    <text evidence="1">Participates actively in the response to hyperosmotic and heat shock by preventing the aggregation of stress-denatured proteins and by disaggregating proteins, also in an autonomous, DnaK-independent fashion. Unfolded proteins bind initially to DnaJ; upon interaction with the DnaJ-bound protein, DnaK hydrolyzes its bound ATP, resulting in the formation of a stable complex. GrpE releases ADP from DnaK; ATP binding to DnaK triggers the release of the substrate protein, thus completing the reaction cycle. Several rounds of ATP-dependent interactions between DnaJ, DnaK and GrpE are required for fully efficient folding. Also involved, together with DnaK and GrpE, in the DNA replication of plasmids through activation of initiation proteins.</text>
</comment>
<comment type="cofactor">
    <cofactor evidence="1">
        <name>Zn(2+)</name>
        <dbReference type="ChEBI" id="CHEBI:29105"/>
    </cofactor>
    <text evidence="1">Binds 2 Zn(2+) ions per monomer.</text>
</comment>
<comment type="subunit">
    <text evidence="1">Homodimer.</text>
</comment>
<comment type="subcellular location">
    <subcellularLocation>
        <location evidence="1">Cytoplasm</location>
    </subcellularLocation>
</comment>
<comment type="domain">
    <text evidence="1">The J domain is necessary and sufficient to stimulate DnaK ATPase activity. Zinc center 1 plays an important role in the autonomous, DnaK-independent chaperone activity of DnaJ. Zinc center 2 is essential for interaction with DnaK and for DnaJ activity.</text>
</comment>
<comment type="similarity">
    <text evidence="1">Belongs to the DnaJ family.</text>
</comment>
<name>DNAJ_STRP1</name>
<accession>P0C0B6</accession>
<accession>Q48X10</accession>
<accession>Q99YC9</accession>
<accession>Q9FAZ9</accession>
<keyword id="KW-0143">Chaperone</keyword>
<keyword id="KW-0963">Cytoplasm</keyword>
<keyword id="KW-0235">DNA replication</keyword>
<keyword id="KW-0479">Metal-binding</keyword>
<keyword id="KW-1185">Reference proteome</keyword>
<keyword id="KW-0677">Repeat</keyword>
<keyword id="KW-0346">Stress response</keyword>
<keyword id="KW-0862">Zinc</keyword>
<keyword id="KW-0863">Zinc-finger</keyword>
<evidence type="ECO:0000255" key="1">
    <source>
        <dbReference type="HAMAP-Rule" id="MF_01152"/>
    </source>
</evidence>
<evidence type="ECO:0000305" key="2"/>
<protein>
    <recommendedName>
        <fullName evidence="1">Chaperone protein DnaJ</fullName>
    </recommendedName>
</protein>
<dbReference type="EMBL" id="AE004092">
    <property type="protein sequence ID" value="AAK34500.1"/>
    <property type="molecule type" value="Genomic_DNA"/>
</dbReference>
<dbReference type="EMBL" id="CP000017">
    <property type="protein sequence ID" value="AAZ52115.1"/>
    <property type="molecule type" value="Genomic_DNA"/>
</dbReference>
<dbReference type="RefSeq" id="NP_269779.1">
    <property type="nucleotide sequence ID" value="NC_002737.2"/>
</dbReference>
<dbReference type="SMR" id="P0C0B6"/>
<dbReference type="PaxDb" id="1314-HKU360_01552"/>
<dbReference type="KEGG" id="spy:SPy_1759"/>
<dbReference type="KEGG" id="spz:M5005_Spy1497"/>
<dbReference type="PATRIC" id="fig|160490.10.peg.1530"/>
<dbReference type="HOGENOM" id="CLU_017633_0_7_9"/>
<dbReference type="OMA" id="MATDYYA"/>
<dbReference type="Proteomes" id="UP000000750">
    <property type="component" value="Chromosome"/>
</dbReference>
<dbReference type="GO" id="GO:0005737">
    <property type="term" value="C:cytoplasm"/>
    <property type="evidence" value="ECO:0007669"/>
    <property type="project" value="UniProtKB-SubCell"/>
</dbReference>
<dbReference type="GO" id="GO:0005524">
    <property type="term" value="F:ATP binding"/>
    <property type="evidence" value="ECO:0007669"/>
    <property type="project" value="InterPro"/>
</dbReference>
<dbReference type="GO" id="GO:0031072">
    <property type="term" value="F:heat shock protein binding"/>
    <property type="evidence" value="ECO:0007669"/>
    <property type="project" value="InterPro"/>
</dbReference>
<dbReference type="GO" id="GO:0051082">
    <property type="term" value="F:unfolded protein binding"/>
    <property type="evidence" value="ECO:0007669"/>
    <property type="project" value="UniProtKB-UniRule"/>
</dbReference>
<dbReference type="GO" id="GO:0008270">
    <property type="term" value="F:zinc ion binding"/>
    <property type="evidence" value="ECO:0007669"/>
    <property type="project" value="UniProtKB-UniRule"/>
</dbReference>
<dbReference type="GO" id="GO:0051085">
    <property type="term" value="P:chaperone cofactor-dependent protein refolding"/>
    <property type="evidence" value="ECO:0007669"/>
    <property type="project" value="TreeGrafter"/>
</dbReference>
<dbReference type="GO" id="GO:0006260">
    <property type="term" value="P:DNA replication"/>
    <property type="evidence" value="ECO:0007669"/>
    <property type="project" value="UniProtKB-KW"/>
</dbReference>
<dbReference type="GO" id="GO:0042026">
    <property type="term" value="P:protein refolding"/>
    <property type="evidence" value="ECO:0007669"/>
    <property type="project" value="TreeGrafter"/>
</dbReference>
<dbReference type="GO" id="GO:0009408">
    <property type="term" value="P:response to heat"/>
    <property type="evidence" value="ECO:0007669"/>
    <property type="project" value="InterPro"/>
</dbReference>
<dbReference type="CDD" id="cd06257">
    <property type="entry name" value="DnaJ"/>
    <property type="match status" value="1"/>
</dbReference>
<dbReference type="CDD" id="cd10747">
    <property type="entry name" value="DnaJ_C"/>
    <property type="match status" value="1"/>
</dbReference>
<dbReference type="CDD" id="cd10719">
    <property type="entry name" value="DnaJ_zf"/>
    <property type="match status" value="1"/>
</dbReference>
<dbReference type="FunFam" id="1.10.287.110:FF:000031">
    <property type="entry name" value="Molecular chaperone DnaJ"/>
    <property type="match status" value="1"/>
</dbReference>
<dbReference type="FunFam" id="2.10.230.10:FF:000002">
    <property type="entry name" value="Molecular chaperone DnaJ"/>
    <property type="match status" value="1"/>
</dbReference>
<dbReference type="FunFam" id="2.60.260.20:FF:000004">
    <property type="entry name" value="Molecular chaperone DnaJ"/>
    <property type="match status" value="1"/>
</dbReference>
<dbReference type="Gene3D" id="1.10.287.110">
    <property type="entry name" value="DnaJ domain"/>
    <property type="match status" value="1"/>
</dbReference>
<dbReference type="Gene3D" id="2.10.230.10">
    <property type="entry name" value="Heat shock protein DnaJ, cysteine-rich domain"/>
    <property type="match status" value="1"/>
</dbReference>
<dbReference type="Gene3D" id="2.60.260.20">
    <property type="entry name" value="Urease metallochaperone UreE, N-terminal domain"/>
    <property type="match status" value="2"/>
</dbReference>
<dbReference type="HAMAP" id="MF_01152">
    <property type="entry name" value="DnaJ"/>
    <property type="match status" value="1"/>
</dbReference>
<dbReference type="InterPro" id="IPR012724">
    <property type="entry name" value="DnaJ"/>
</dbReference>
<dbReference type="InterPro" id="IPR002939">
    <property type="entry name" value="DnaJ_C"/>
</dbReference>
<dbReference type="InterPro" id="IPR001623">
    <property type="entry name" value="DnaJ_domain"/>
</dbReference>
<dbReference type="InterPro" id="IPR018253">
    <property type="entry name" value="DnaJ_domain_CS"/>
</dbReference>
<dbReference type="InterPro" id="IPR008971">
    <property type="entry name" value="HSP40/DnaJ_pept-bd"/>
</dbReference>
<dbReference type="InterPro" id="IPR001305">
    <property type="entry name" value="HSP_DnaJ_Cys-rich_dom"/>
</dbReference>
<dbReference type="InterPro" id="IPR036410">
    <property type="entry name" value="HSP_DnaJ_Cys-rich_dom_sf"/>
</dbReference>
<dbReference type="InterPro" id="IPR036869">
    <property type="entry name" value="J_dom_sf"/>
</dbReference>
<dbReference type="NCBIfam" id="TIGR02349">
    <property type="entry name" value="DnaJ_bact"/>
    <property type="match status" value="1"/>
</dbReference>
<dbReference type="NCBIfam" id="NF008035">
    <property type="entry name" value="PRK10767.1"/>
    <property type="match status" value="1"/>
</dbReference>
<dbReference type="NCBIfam" id="NF010869">
    <property type="entry name" value="PRK14276.1"/>
    <property type="match status" value="1"/>
</dbReference>
<dbReference type="PANTHER" id="PTHR43096:SF48">
    <property type="entry name" value="CHAPERONE PROTEIN DNAJ"/>
    <property type="match status" value="1"/>
</dbReference>
<dbReference type="PANTHER" id="PTHR43096">
    <property type="entry name" value="DNAJ HOMOLOG 1, MITOCHONDRIAL-RELATED"/>
    <property type="match status" value="1"/>
</dbReference>
<dbReference type="Pfam" id="PF00226">
    <property type="entry name" value="DnaJ"/>
    <property type="match status" value="1"/>
</dbReference>
<dbReference type="Pfam" id="PF01556">
    <property type="entry name" value="DnaJ_C"/>
    <property type="match status" value="1"/>
</dbReference>
<dbReference type="Pfam" id="PF00684">
    <property type="entry name" value="DnaJ_CXXCXGXG"/>
    <property type="match status" value="1"/>
</dbReference>
<dbReference type="PRINTS" id="PR00625">
    <property type="entry name" value="JDOMAIN"/>
</dbReference>
<dbReference type="SMART" id="SM00271">
    <property type="entry name" value="DnaJ"/>
    <property type="match status" value="1"/>
</dbReference>
<dbReference type="SUPFAM" id="SSF46565">
    <property type="entry name" value="Chaperone J-domain"/>
    <property type="match status" value="1"/>
</dbReference>
<dbReference type="SUPFAM" id="SSF57938">
    <property type="entry name" value="DnaJ/Hsp40 cysteine-rich domain"/>
    <property type="match status" value="1"/>
</dbReference>
<dbReference type="SUPFAM" id="SSF49493">
    <property type="entry name" value="HSP40/DnaJ peptide-binding domain"/>
    <property type="match status" value="2"/>
</dbReference>
<dbReference type="PROSITE" id="PS00636">
    <property type="entry name" value="DNAJ_1"/>
    <property type="match status" value="1"/>
</dbReference>
<dbReference type="PROSITE" id="PS50076">
    <property type="entry name" value="DNAJ_2"/>
    <property type="match status" value="1"/>
</dbReference>
<dbReference type="PROSITE" id="PS51188">
    <property type="entry name" value="ZF_CR"/>
    <property type="match status" value="1"/>
</dbReference>
<sequence>MNNTEYYDRLGVSKDASQDDIKKAYRKMSKKYHPDINKEAGAEQKYKDVQEAYETLSDSQKRAAYDQYGAAGAQGGFGGGAGGFGGFDGGGFGGFEDIFSSFFGGGGSRNPNAPRQGDDLQYRVNLSFEEAVFGVEKEVSYNREATCGTCLGSGAKPGTAPVTCRKCHGSGVMTIDTQTPLGMMRRQVTCDICHGSGKEIKEPCQTCHGTGHEKQAHKVSVKIPAGVETGQQIRLQGQGEAGFNGGPYGDLFVILNVLPSKQFERNGSTIYYNLDISFTQAALGDTVEIPTVHGDVEMAIPAGTQTGKTFRLKGKGAPKLRGGGQGDQHVTVNIVTPTKLNDAQREALQAFAEASGEKMLHPKKKGFFDKVKDALEDI</sequence>
<gene>
    <name evidence="1" type="primary">dnaJ</name>
    <name type="ordered locus">SPy_1759</name>
    <name type="ordered locus">M5005_Spy1497</name>
</gene>
<organism>
    <name type="scientific">Streptococcus pyogenes serotype M1</name>
    <dbReference type="NCBI Taxonomy" id="301447"/>
    <lineage>
        <taxon>Bacteria</taxon>
        <taxon>Bacillati</taxon>
        <taxon>Bacillota</taxon>
        <taxon>Bacilli</taxon>
        <taxon>Lactobacillales</taxon>
        <taxon>Streptococcaceae</taxon>
        <taxon>Streptococcus</taxon>
    </lineage>
</organism>